<organism>
    <name type="scientific">Xenopus laevis</name>
    <name type="common">African clawed frog</name>
    <dbReference type="NCBI Taxonomy" id="8355"/>
    <lineage>
        <taxon>Eukaryota</taxon>
        <taxon>Metazoa</taxon>
        <taxon>Chordata</taxon>
        <taxon>Craniata</taxon>
        <taxon>Vertebrata</taxon>
        <taxon>Euteleostomi</taxon>
        <taxon>Amphibia</taxon>
        <taxon>Batrachia</taxon>
        <taxon>Anura</taxon>
        <taxon>Pipoidea</taxon>
        <taxon>Pipidae</taxon>
        <taxon>Xenopodinae</taxon>
        <taxon>Xenopus</taxon>
        <taxon>Xenopus</taxon>
    </lineage>
</organism>
<name>TCAF_XENLA</name>
<comment type="function">
    <text evidence="1 2">May play a role in the regulation of the cation channel TRPM8 activity.</text>
</comment>
<comment type="similarity">
    <text evidence="4">Belongs to the TCAF family.</text>
</comment>
<dbReference type="EMBL" id="BC084073">
    <property type="protein sequence ID" value="AAH84073.1"/>
    <property type="molecule type" value="mRNA"/>
</dbReference>
<dbReference type="RefSeq" id="NP_001088165.1">
    <property type="nucleotide sequence ID" value="NM_001094696.1"/>
</dbReference>
<dbReference type="SMR" id="Q5XHI4"/>
<dbReference type="BioGRID" id="105069">
    <property type="interactions" value="1"/>
</dbReference>
<dbReference type="DNASU" id="494989"/>
<dbReference type="GeneID" id="494989"/>
<dbReference type="KEGG" id="xla:494989"/>
<dbReference type="AGR" id="Xenbase:XB-GENE-6078820"/>
<dbReference type="CTD" id="494989"/>
<dbReference type="Xenbase" id="XB-GENE-6078820">
    <property type="gene designation" value="tcaf1.L"/>
</dbReference>
<dbReference type="OMA" id="YMAIPAE"/>
<dbReference type="OrthoDB" id="10260387at2759"/>
<dbReference type="Proteomes" id="UP000186698">
    <property type="component" value="Chromosome 3L"/>
</dbReference>
<dbReference type="Bgee" id="494989">
    <property type="expression patterns" value="Expressed in neurula embryo and 4 other cell types or tissues"/>
</dbReference>
<dbReference type="GO" id="GO:0005886">
    <property type="term" value="C:plasma membrane"/>
    <property type="evidence" value="ECO:0000318"/>
    <property type="project" value="GO_Central"/>
</dbReference>
<dbReference type="GO" id="GO:0044325">
    <property type="term" value="F:transmembrane transporter binding"/>
    <property type="evidence" value="ECO:0000318"/>
    <property type="project" value="GO_Central"/>
</dbReference>
<dbReference type="GO" id="GO:0090314">
    <property type="term" value="P:positive regulation of protein targeting to membrane"/>
    <property type="evidence" value="ECO:0007669"/>
    <property type="project" value="TreeGrafter"/>
</dbReference>
<dbReference type="FunFam" id="1.10.390.30:FF:000001">
    <property type="entry name" value="TRPM8 channel-associated factor 1"/>
    <property type="match status" value="1"/>
</dbReference>
<dbReference type="FunFam" id="3.40.390.80:FF:000001">
    <property type="entry name" value="TRPM8 channel-associated factor 1"/>
    <property type="match status" value="1"/>
</dbReference>
<dbReference type="Gene3D" id="3.40.390.80">
    <property type="entry name" value="Peptidase M60, enhancin-like domain 2"/>
    <property type="match status" value="1"/>
</dbReference>
<dbReference type="Gene3D" id="1.10.390.30">
    <property type="entry name" value="Peptidase M60, enhancin-like domain 3"/>
    <property type="match status" value="1"/>
</dbReference>
<dbReference type="InterPro" id="IPR029062">
    <property type="entry name" value="Class_I_gatase-like"/>
</dbReference>
<dbReference type="InterPro" id="IPR035423">
    <property type="entry name" value="M60-like_N"/>
</dbReference>
<dbReference type="InterPro" id="IPR042279">
    <property type="entry name" value="Pep_M60_3"/>
</dbReference>
<dbReference type="InterPro" id="IPR031161">
    <property type="entry name" value="Peptidase_M60_dom"/>
</dbReference>
<dbReference type="InterPro" id="IPR051244">
    <property type="entry name" value="TCAF"/>
</dbReference>
<dbReference type="PANTHER" id="PTHR15730">
    <property type="entry name" value="EXPERIMENTAL AUTOIMMUNE PROSTATITIS ANTIGEN 2-RELATED"/>
    <property type="match status" value="1"/>
</dbReference>
<dbReference type="PANTHER" id="PTHR15730:SF7">
    <property type="entry name" value="TRPM8 CHANNEL-ASSOCIATED FACTOR HOMOLOG"/>
    <property type="match status" value="1"/>
</dbReference>
<dbReference type="Pfam" id="PF17291">
    <property type="entry name" value="M60-like_N"/>
    <property type="match status" value="1"/>
</dbReference>
<dbReference type="Pfam" id="PF13402">
    <property type="entry name" value="Peptidase_M60"/>
    <property type="match status" value="1"/>
</dbReference>
<dbReference type="SMART" id="SM01276">
    <property type="entry name" value="M60-like"/>
    <property type="match status" value="1"/>
</dbReference>
<dbReference type="SUPFAM" id="SSF52317">
    <property type="entry name" value="Class I glutamine amidotransferase-like"/>
    <property type="match status" value="2"/>
</dbReference>
<dbReference type="PROSITE" id="PS51723">
    <property type="entry name" value="PEPTIDASE_M60"/>
    <property type="match status" value="1"/>
</dbReference>
<gene>
    <name type="primary">tcaf</name>
    <name type="synonym">tcaf1</name>
</gene>
<reference key="1">
    <citation type="submission" date="2004-10" db="EMBL/GenBank/DDBJ databases">
        <authorList>
            <consortium name="NIH - Xenopus Gene Collection (XGC) project"/>
        </authorList>
    </citation>
    <scope>NUCLEOTIDE SEQUENCE [LARGE SCALE MRNA]</scope>
    <source>
        <tissue>Embryo</tissue>
    </source>
</reference>
<protein>
    <recommendedName>
        <fullName>TRPM8 channel-associated factor homolog</fullName>
    </recommendedName>
    <alternativeName>
        <fullName>TRPM8 channel-associated factor 1</fullName>
    </alternativeName>
</protein>
<keyword id="KW-1185">Reference proteome</keyword>
<proteinExistence type="evidence at transcript level"/>
<sequence>MKVLEDYRSLVHGIGSLDFSGDAVPCKLLLTGDTAFPVLVTPRKDVLIAASRYGKGKVVVMAHESYLNTNAFMDFLKNAVSWLSPNSEANIGVHKGLNLLTDNLSANGSKVQNTSTLIEGLGVFCTIGYDDSQDKQIISFVREGGGLLIGAQAWHWSYSHKQENVLHHFPGNKIISVSGVHFTSDYGEKGNICVMENIPQAPIYTSFDFSLDQKYLLKGMSQLDISGSSIPSDLLLHGTLSFPVGLSENKQCFLGATYYGKGRVVVATHEGYLSKSELKTIMLNAISWLDINQNRRIGVHKGLRQFAELLQKENIPCNISSLDPDLSVYCCTSYSDAEAKAIHEFVAEGGGLLIAGHAWYWSSQNSDLDVLIQYPGNKILNKFGISILDRTIPGGNYNAINPDESSQQYHFRRGLCNLQAELRSGAEVKPPLSIWMNKLRQDVTAFMRLPANPIISSIQSQFVEMMQICEIPNVTKQCPVSSCSKEAFILCLAQECFNVCDESHILEKEPSITVEIDGTNPGNNAWRSTGLYLAPRKTAVLEFPASAVHQGLQVQVGCQSDDLSSADKYCRAPVVVRRFHVDSQRVSVSCFWGGLVYITVKANSNLGIIPVKVYEAEPAPIYIKGKTSLDTWIQSIRNLPAPWAELITENIILTVPSDAIRSLSDPEALLSLWDKIMVAITELAAIPKKLPRPERFVADVQISAGWMHAGYPIMCHLESAKELTDLNIMQTGGIWGPIHELGHNQQKTNWELPPHTTEATCNLWSVYVHETVLGIPRSQAHCCLQAETRANHIQEYLRNGSNIEQWNVWTALETYLQLQEGFGWEPFKQLFKDYQSMSGIRNENKSKMNLWAEKFSEAVQTNLVPFFEAWGWPIEEATHSKLSVLPVWEKDPMKSYLSARKSNSN</sequence>
<accession>Q5XHI4</accession>
<evidence type="ECO:0000250" key="1">
    <source>
        <dbReference type="UniProtKB" id="A6NFQ2"/>
    </source>
</evidence>
<evidence type="ECO:0000250" key="2">
    <source>
        <dbReference type="UniProtKB" id="Q9Y4C2"/>
    </source>
</evidence>
<evidence type="ECO:0000255" key="3">
    <source>
        <dbReference type="PROSITE-ProRule" id="PRU01060"/>
    </source>
</evidence>
<evidence type="ECO:0000305" key="4"/>
<feature type="chain" id="PRO_0000320190" description="TRPM8 channel-associated factor homolog">
    <location>
        <begin position="1"/>
        <end position="905"/>
    </location>
</feature>
<feature type="domain" description="Peptidase M60" evidence="3">
    <location>
        <begin position="524"/>
        <end position="823"/>
    </location>
</feature>